<gene>
    <name evidence="1" type="primary">nrdI</name>
    <name type="ordered locus">MGAS10750_Spy0350</name>
</gene>
<organism>
    <name type="scientific">Streptococcus pyogenes serotype M4 (strain MGAS10750)</name>
    <dbReference type="NCBI Taxonomy" id="370554"/>
    <lineage>
        <taxon>Bacteria</taxon>
        <taxon>Bacillati</taxon>
        <taxon>Bacillota</taxon>
        <taxon>Bacilli</taxon>
        <taxon>Lactobacillales</taxon>
        <taxon>Streptococcaceae</taxon>
        <taxon>Streptococcus</taxon>
    </lineage>
</organism>
<evidence type="ECO:0000255" key="1">
    <source>
        <dbReference type="HAMAP-Rule" id="MF_00128"/>
    </source>
</evidence>
<comment type="function">
    <text evidence="1">Probably involved in ribonucleotide reductase function.</text>
</comment>
<comment type="similarity">
    <text evidence="1">Belongs to the NrdI family.</text>
</comment>
<protein>
    <recommendedName>
        <fullName evidence="1">Protein NrdI</fullName>
    </recommendedName>
</protein>
<accession>Q1J861</accession>
<reference key="1">
    <citation type="journal article" date="2006" name="Proc. Natl. Acad. Sci. U.S.A.">
        <title>Molecular genetic anatomy of inter- and intraserotype variation in the human bacterial pathogen group A Streptococcus.</title>
        <authorList>
            <person name="Beres S.B."/>
            <person name="Richter E.W."/>
            <person name="Nagiec M.J."/>
            <person name="Sumby P."/>
            <person name="Porcella S.F."/>
            <person name="DeLeo F.R."/>
            <person name="Musser J.M."/>
        </authorList>
    </citation>
    <scope>NUCLEOTIDE SEQUENCE [LARGE SCALE GENOMIC DNA]</scope>
    <source>
        <strain>MGAS10750</strain>
    </source>
</reference>
<proteinExistence type="inferred from homology"/>
<dbReference type="EMBL" id="CP000262">
    <property type="protein sequence ID" value="ABF37300.1"/>
    <property type="molecule type" value="Genomic_DNA"/>
</dbReference>
<dbReference type="SMR" id="Q1J861"/>
<dbReference type="KEGG" id="spi:MGAS10750_Spy0350"/>
<dbReference type="HOGENOM" id="CLU_114845_0_0_9"/>
<dbReference type="Proteomes" id="UP000002434">
    <property type="component" value="Chromosome"/>
</dbReference>
<dbReference type="GO" id="GO:0010181">
    <property type="term" value="F:FMN binding"/>
    <property type="evidence" value="ECO:0007669"/>
    <property type="project" value="InterPro"/>
</dbReference>
<dbReference type="GO" id="GO:0036211">
    <property type="term" value="P:protein modification process"/>
    <property type="evidence" value="ECO:0007669"/>
    <property type="project" value="InterPro"/>
</dbReference>
<dbReference type="Gene3D" id="3.40.50.360">
    <property type="match status" value="1"/>
</dbReference>
<dbReference type="HAMAP" id="MF_00128">
    <property type="entry name" value="NrdI"/>
    <property type="match status" value="1"/>
</dbReference>
<dbReference type="InterPro" id="IPR029039">
    <property type="entry name" value="Flavoprotein-like_sf"/>
</dbReference>
<dbReference type="InterPro" id="IPR020852">
    <property type="entry name" value="RNR_Ib_NrdI_bac"/>
</dbReference>
<dbReference type="InterPro" id="IPR004465">
    <property type="entry name" value="RNR_NrdI"/>
</dbReference>
<dbReference type="NCBIfam" id="TIGR00333">
    <property type="entry name" value="nrdI"/>
    <property type="match status" value="1"/>
</dbReference>
<dbReference type="PANTHER" id="PTHR37297">
    <property type="entry name" value="PROTEIN NRDI"/>
    <property type="match status" value="1"/>
</dbReference>
<dbReference type="PANTHER" id="PTHR37297:SF1">
    <property type="entry name" value="PROTEIN NRDI"/>
    <property type="match status" value="1"/>
</dbReference>
<dbReference type="Pfam" id="PF07972">
    <property type="entry name" value="Flavodoxin_NdrI"/>
    <property type="match status" value="1"/>
</dbReference>
<dbReference type="PIRSF" id="PIRSF005087">
    <property type="entry name" value="NrdI"/>
    <property type="match status" value="1"/>
</dbReference>
<dbReference type="SUPFAM" id="SSF52218">
    <property type="entry name" value="Flavoproteins"/>
    <property type="match status" value="1"/>
</dbReference>
<feature type="chain" id="PRO_1000016533" description="Protein NrdI">
    <location>
        <begin position="1"/>
        <end position="144"/>
    </location>
</feature>
<name>NRDI_STRPF</name>
<sequence length="144" mass="15906">MAELIIVYFSSKSNNTHRFVQKLGLPAQRIPVDNRPLEVSTHYLLIVPTYAAGGSDAKGAVPKQVIRFLNNPNNRKHCKGVISSGNTNFGDTFALAGPIISQKLQVPLLHQFELLGTATDVKKVQAIFARLKHHTHDKQNKPTT</sequence>